<dbReference type="EC" id="1.3.1.122" evidence="3"/>
<dbReference type="EMBL" id="KY882235">
    <property type="protein sequence ID" value="ASM62111.1"/>
    <property type="molecule type" value="mRNA"/>
</dbReference>
<dbReference type="SMR" id="A0A221J5X3"/>
<dbReference type="GO" id="GO:0016627">
    <property type="term" value="F:oxidoreductase activity, acting on the CH-CH group of donors"/>
    <property type="evidence" value="ECO:0007669"/>
    <property type="project" value="UniProtKB-ARBA"/>
</dbReference>
<dbReference type="CDD" id="cd08948">
    <property type="entry name" value="5beta-POR_like_SDR_a"/>
    <property type="match status" value="1"/>
</dbReference>
<dbReference type="FunFam" id="3.40.50.720:FF:000808">
    <property type="entry name" value="Iridoid synthase"/>
    <property type="match status" value="1"/>
</dbReference>
<dbReference type="Gene3D" id="3.40.50.720">
    <property type="entry name" value="NAD(P)-binding Rossmann-like Domain"/>
    <property type="match status" value="1"/>
</dbReference>
<dbReference type="InterPro" id="IPR036291">
    <property type="entry name" value="NAD(P)-bd_dom_sf"/>
</dbReference>
<dbReference type="InterPro" id="IPR055222">
    <property type="entry name" value="PRISE-like_Rossmann-fold"/>
</dbReference>
<dbReference type="PANTHER" id="PTHR32487">
    <property type="entry name" value="3-OXO-DELTA(4,5)-STEROID 5-BETA-REDUCTASE"/>
    <property type="match status" value="1"/>
</dbReference>
<dbReference type="PANTHER" id="PTHR32487:SF0">
    <property type="entry name" value="3-OXO-DELTA(4,5)-STEROID 5-BETA-REDUCTASE"/>
    <property type="match status" value="1"/>
</dbReference>
<dbReference type="Pfam" id="PF22917">
    <property type="entry name" value="PRISE"/>
    <property type="match status" value="1"/>
</dbReference>
<dbReference type="SUPFAM" id="SSF51735">
    <property type="entry name" value="NAD(P)-binding Rossmann-fold domains"/>
    <property type="match status" value="1"/>
</dbReference>
<evidence type="ECO:0000250" key="1">
    <source>
        <dbReference type="UniProtKB" id="K7WDL7"/>
    </source>
</evidence>
<evidence type="ECO:0000250" key="2">
    <source>
        <dbReference type="UniProtKB" id="Q9STX2"/>
    </source>
</evidence>
<evidence type="ECO:0000269" key="3">
    <source>
    </source>
</evidence>
<evidence type="ECO:0000303" key="4">
    <source>
    </source>
</evidence>
<evidence type="ECO:0000305" key="5"/>
<evidence type="ECO:0000305" key="6">
    <source>
    </source>
</evidence>
<feature type="chain" id="PRO_0000449834" description="(S)-8-oxocitronellyl enol synthase ISY1">
    <location>
        <begin position="1"/>
        <end position="388"/>
    </location>
</feature>
<feature type="active site" evidence="6">
    <location>
        <position position="147"/>
    </location>
</feature>
<feature type="active site" evidence="6">
    <location>
        <position position="178"/>
    </location>
</feature>
<feature type="binding site" evidence="1">
    <location>
        <begin position="35"/>
        <end position="37"/>
    </location>
    <ligand>
        <name>NADP(+)</name>
        <dbReference type="ChEBI" id="CHEBI:58349"/>
    </ligand>
</feature>
<feature type="binding site" evidence="1">
    <location>
        <begin position="63"/>
        <end position="64"/>
    </location>
    <ligand>
        <name>NADP(+)</name>
        <dbReference type="ChEBI" id="CHEBI:58349"/>
    </ligand>
</feature>
<feature type="binding site" evidence="1">
    <location>
        <begin position="81"/>
        <end position="82"/>
    </location>
    <ligand>
        <name>NADP(+)</name>
        <dbReference type="ChEBI" id="CHEBI:58349"/>
    </ligand>
</feature>
<feature type="binding site" evidence="1">
    <location>
        <begin position="105"/>
        <end position="106"/>
    </location>
    <ligand>
        <name>NADP(+)</name>
        <dbReference type="ChEBI" id="CHEBI:58349"/>
    </ligand>
</feature>
<feature type="binding site" evidence="1">
    <location>
        <position position="143"/>
    </location>
    <ligand>
        <name>NADP(+)</name>
        <dbReference type="ChEBI" id="CHEBI:58349"/>
    </ligand>
</feature>
<feature type="binding site" evidence="1">
    <location>
        <position position="178"/>
    </location>
    <ligand>
        <name>NADP(+)</name>
        <dbReference type="ChEBI" id="CHEBI:58349"/>
    </ligand>
</feature>
<feature type="binding site" evidence="2">
    <location>
        <position position="205"/>
    </location>
    <ligand>
        <name>NADP(+)</name>
        <dbReference type="ChEBI" id="CHEBI:58349"/>
    </ligand>
</feature>
<feature type="binding site" evidence="1">
    <location>
        <begin position="212"/>
        <end position="214"/>
    </location>
    <ligand>
        <name>NADP(+)</name>
        <dbReference type="ChEBI" id="CHEBI:58349"/>
    </ligand>
</feature>
<accession>A0A221J5X3</accession>
<name>ISY1_NEPRA</name>
<proteinExistence type="evidence at protein level"/>
<sequence>MSWWWAGAIGAAKKRIDEDEAPRNYESVALIVGVTGIVGNSLAEILPLSDTPCGPWKVYGVARRPRPSWNEDHPITYISCDVLDSVDVEAKLSPLTDVTHIFYATWTKRSTEKENCEANGKMLKNVLNAMIPNCPNLKHICLQTGRKHYLGAFEDWKIKRHDPPLTEDLPRLDSQNFYYTQEDILFEEVQKKESLTWSVHRPGTIFGFSPYSMMNLVGTLCVYAAICKHEGAVLRFPGCKGAWDGYSDCSDADLIAEHQIWAAVDPYAKNEAFNVSNGDVFKWKHFWKVLAEQFGVECGEYEEGKEVKLQDLMKDKGPVWDKIVRENGLSTTKLEDVGNWWFSDIVLGNECWLDTMNKSKEHGFLGFRNSKNSFISWIDKVKAFKIVP</sequence>
<organism>
    <name type="scientific">Nepeta racemosa</name>
    <name type="common">Catmint</name>
    <name type="synonym">Raceme catnip</name>
    <dbReference type="NCBI Taxonomy" id="54731"/>
    <lineage>
        <taxon>Eukaryota</taxon>
        <taxon>Viridiplantae</taxon>
        <taxon>Streptophyta</taxon>
        <taxon>Embryophyta</taxon>
        <taxon>Tracheophyta</taxon>
        <taxon>Spermatophyta</taxon>
        <taxon>Magnoliopsida</taxon>
        <taxon>eudicotyledons</taxon>
        <taxon>Gunneridae</taxon>
        <taxon>Pentapetalae</taxon>
        <taxon>asterids</taxon>
        <taxon>lamiids</taxon>
        <taxon>Lamiales</taxon>
        <taxon>Lamiaceae</taxon>
        <taxon>Nepetoideae</taxon>
        <taxon>Mentheae</taxon>
        <taxon>Nepetinae</taxon>
        <taxon>Nepeta</taxon>
    </lineage>
</organism>
<protein>
    <recommendedName>
        <fullName evidence="5">(S)-8-oxocitronellyl enol synthase ISY1</fullName>
        <ecNumber evidence="3">1.3.1.122</ecNumber>
    </recommendedName>
    <alternativeName>
        <fullName evidence="4">Iridoid synthase 1</fullName>
        <shortName evidence="4">NmISY1</shortName>
    </alternativeName>
</protein>
<reference key="1">
    <citation type="journal article" date="2018" name="Phytochemistry">
        <title>Identification of iridoid synthases from Nepeta species: Iridoid cyclization does not determine nepetalactone stereochemistry.</title>
        <authorList>
            <person name="Sherden N.H."/>
            <person name="Lichman B."/>
            <person name="Caputi L."/>
            <person name="Zhao D."/>
            <person name="Kamileen M.O."/>
            <person name="Buell C.R."/>
            <person name="O'Connor S.E."/>
        </authorList>
    </citation>
    <scope>NUCLEOTIDE SEQUENCE [MRNA]</scope>
    <scope>FUNCTION</scope>
    <scope>CATALYTIC ACTIVITY</scope>
    <scope>ACTIVE SITES</scope>
</reference>
<comment type="function">
    <text evidence="3 5">Iridoid synthase that catalyzes the first step in generation of the iridoid ring scaffold using the linear monoterpene (6E)-8-oxogeranial as substrate (PubMed:29091815). Iridoids comprise a large family of distinctive bicyclic monoterpenes that possess a wide range of pharmacological activities, including anticancer, anti-inflammatory, antifungal and antibacterial activities (Probable). Catalyzes the conversion of the linear monoterpene (6E)-8-oxogeranial to (S)-8-oxocitronellyl enol, a precursor of nepetalactones, which are metabolites that are both insect-repellent and have euphoric effect in cats (PubMed:29091815).</text>
</comment>
<comment type="catalytic activity">
    <reaction evidence="3">
        <text>(S)-8-oxocitronellyl enol + NADP(+) = (6E)-8-oxogeranial + NADPH + H(+)</text>
        <dbReference type="Rhea" id="RHEA:62592"/>
        <dbReference type="ChEBI" id="CHEBI:15378"/>
        <dbReference type="ChEBI" id="CHEBI:57783"/>
        <dbReference type="ChEBI" id="CHEBI:58349"/>
        <dbReference type="ChEBI" id="CHEBI:64239"/>
        <dbReference type="ChEBI" id="CHEBI:144481"/>
        <dbReference type="EC" id="1.3.1.122"/>
    </reaction>
    <physiologicalReaction direction="right-to-left" evidence="3">
        <dbReference type="Rhea" id="RHEA:62594"/>
    </physiologicalReaction>
</comment>
<comment type="catalytic activity">
    <reaction evidence="1">
        <text>(S)-8-oxocitronellyl enol + NAD(+) = (6E)-8-oxogeranial + NADH + H(+)</text>
        <dbReference type="Rhea" id="RHEA:62596"/>
        <dbReference type="ChEBI" id="CHEBI:15378"/>
        <dbReference type="ChEBI" id="CHEBI:57540"/>
        <dbReference type="ChEBI" id="CHEBI:57945"/>
        <dbReference type="ChEBI" id="CHEBI:64239"/>
        <dbReference type="ChEBI" id="CHEBI:144481"/>
        <dbReference type="EC" id="1.3.1.122"/>
    </reaction>
    <physiologicalReaction direction="right-to-left" evidence="1">
        <dbReference type="Rhea" id="RHEA:62598"/>
    </physiologicalReaction>
</comment>
<comment type="similarity">
    <text evidence="5">Belongs to the short-chain dehydrogenases/reductases (SDR) family.</text>
</comment>
<gene>
    <name evidence="4" type="primary">ISY1</name>
</gene>
<keyword id="KW-0520">NAD</keyword>
<keyword id="KW-0521">NADP</keyword>
<keyword id="KW-0560">Oxidoreductase</keyword>